<keyword id="KW-0472">Membrane</keyword>
<keyword id="KW-1185">Reference proteome</keyword>
<keyword id="KW-0812">Transmembrane</keyword>
<keyword id="KW-1133">Transmembrane helix</keyword>
<keyword id="KW-0834">Unfolded protein response</keyword>
<name>HERP2_BOVIN</name>
<protein>
    <recommendedName>
        <fullName>Homocysteine-responsive endoplasmic reticulum-resident ubiquitin-like domain member 2 protein</fullName>
    </recommendedName>
</protein>
<evidence type="ECO:0000250" key="1"/>
<evidence type="ECO:0000255" key="2"/>
<evidence type="ECO:0000255" key="3">
    <source>
        <dbReference type="PROSITE-ProRule" id="PRU00214"/>
    </source>
</evidence>
<evidence type="ECO:0000256" key="4">
    <source>
        <dbReference type="SAM" id="MobiDB-lite"/>
    </source>
</evidence>
<evidence type="ECO:0000305" key="5"/>
<organism>
    <name type="scientific">Bos taurus</name>
    <name type="common">Bovine</name>
    <dbReference type="NCBI Taxonomy" id="9913"/>
    <lineage>
        <taxon>Eukaryota</taxon>
        <taxon>Metazoa</taxon>
        <taxon>Chordata</taxon>
        <taxon>Craniata</taxon>
        <taxon>Vertebrata</taxon>
        <taxon>Euteleostomi</taxon>
        <taxon>Mammalia</taxon>
        <taxon>Eutheria</taxon>
        <taxon>Laurasiatheria</taxon>
        <taxon>Artiodactyla</taxon>
        <taxon>Ruminantia</taxon>
        <taxon>Pecora</taxon>
        <taxon>Bovidae</taxon>
        <taxon>Bovinae</taxon>
        <taxon>Bos</taxon>
    </lineage>
</organism>
<comment type="function">
    <text evidence="1">Could be involved in the unfolded protein response (UPR) pathway.</text>
</comment>
<comment type="subcellular location">
    <subcellularLocation>
        <location evidence="5">Membrane</location>
        <topology evidence="5">Single-pass membrane protein</topology>
    </subcellularLocation>
</comment>
<reference key="1">
    <citation type="submission" date="2006-08" db="EMBL/GenBank/DDBJ databases">
        <authorList>
            <consortium name="NIH - Mammalian Gene Collection (MGC) project"/>
        </authorList>
    </citation>
    <scope>NUCLEOTIDE SEQUENCE [LARGE SCALE MRNA]</scope>
    <source>
        <strain>Hereford</strain>
        <tissue>Fetal pons</tissue>
    </source>
</reference>
<accession>Q0P5H8</accession>
<sequence>MDQNGMEIPVTLIIKAPNQKYSDQTISCFLNWTVGKLKTHLSNVYPSKPLTKDQRLVYSGRLLPDHLQLKDILRKQDEYHMVHLVCTSRTPPSSPKSSTNRESHEALASNSNSSSDQSGSSTPSSSQETLTLATSSSSEGLRQRTLPQAQTDPAQSHQVPYVMQGNVDNQLPGQAVPAGFPVYPAFNPLQMLWWQQMYAHQYYMQYQAAVSAQATSNANPAQPAATQPLNLAHVPGEEPPPAPNLVAQENRPMNENVQMNAQGGPVLNEEDFNRDWLDWMYTFSRAAILLSIVYFYSSFSRFIMVMGAMLLVYLHQAGWFPFRQEGVQHQAPNNNAEVNNDVQNANNLELEEMERLMDDGLEDESGEDAGEDASAIQRPGLMASAWSFITTFFTSLIPEGPPQVAN</sequence>
<gene>
    <name type="primary">HERPUD2</name>
</gene>
<proteinExistence type="evidence at transcript level"/>
<feature type="chain" id="PRO_0000280626" description="Homocysteine-responsive endoplasmic reticulum-resident ubiquitin-like domain member 2 protein">
    <location>
        <begin position="1"/>
        <end position="406"/>
    </location>
</feature>
<feature type="transmembrane region" description="Helical" evidence="2">
    <location>
        <begin position="302"/>
        <end position="322"/>
    </location>
</feature>
<feature type="domain" description="Ubiquitin-like" evidence="3">
    <location>
        <begin position="10"/>
        <end position="89"/>
    </location>
</feature>
<feature type="region of interest" description="Disordered" evidence="4">
    <location>
        <begin position="86"/>
        <end position="156"/>
    </location>
</feature>
<feature type="compositionally biased region" description="Low complexity" evidence="4">
    <location>
        <begin position="87"/>
        <end position="98"/>
    </location>
</feature>
<feature type="compositionally biased region" description="Low complexity" evidence="4">
    <location>
        <begin position="109"/>
        <end position="139"/>
    </location>
</feature>
<feature type="compositionally biased region" description="Polar residues" evidence="4">
    <location>
        <begin position="145"/>
        <end position="156"/>
    </location>
</feature>
<dbReference type="EMBL" id="BC120015">
    <property type="protein sequence ID" value="AAI20016.1"/>
    <property type="molecule type" value="mRNA"/>
</dbReference>
<dbReference type="RefSeq" id="NP_001069026.1">
    <property type="nucleotide sequence ID" value="NM_001075558.1"/>
</dbReference>
<dbReference type="BMRB" id="Q0P5H8"/>
<dbReference type="SMR" id="Q0P5H8"/>
<dbReference type="FunCoup" id="Q0P5H8">
    <property type="interactions" value="4896"/>
</dbReference>
<dbReference type="STRING" id="9913.ENSBTAP00000020101"/>
<dbReference type="PaxDb" id="9913-ENSBTAP00000020101"/>
<dbReference type="Ensembl" id="ENSBTAT00000020101.4">
    <property type="protein sequence ID" value="ENSBTAP00000020101.3"/>
    <property type="gene ID" value="ENSBTAG00000015105.5"/>
</dbReference>
<dbReference type="GeneID" id="512265"/>
<dbReference type="KEGG" id="bta:512265"/>
<dbReference type="CTD" id="64224"/>
<dbReference type="VEuPathDB" id="HostDB:ENSBTAG00000015105"/>
<dbReference type="VGNC" id="VGNC:29817">
    <property type="gene designation" value="HERPUD2"/>
</dbReference>
<dbReference type="eggNOG" id="KOG4583">
    <property type="taxonomic scope" value="Eukaryota"/>
</dbReference>
<dbReference type="GeneTree" id="ENSGT00390000017671"/>
<dbReference type="HOGENOM" id="CLU_058243_0_0_1"/>
<dbReference type="InParanoid" id="Q0P5H8"/>
<dbReference type="OMA" id="YMQLMAA"/>
<dbReference type="OrthoDB" id="21589at2759"/>
<dbReference type="TreeFam" id="TF324319"/>
<dbReference type="Proteomes" id="UP000009136">
    <property type="component" value="Chromosome 4"/>
</dbReference>
<dbReference type="Bgee" id="ENSBTAG00000015105">
    <property type="expression patterns" value="Expressed in omental fat pad and 104 other cell types or tissues"/>
</dbReference>
<dbReference type="GO" id="GO:0016020">
    <property type="term" value="C:membrane"/>
    <property type="evidence" value="ECO:0007669"/>
    <property type="project" value="UniProtKB-SubCell"/>
</dbReference>
<dbReference type="GO" id="GO:0030968">
    <property type="term" value="P:endoplasmic reticulum unfolded protein response"/>
    <property type="evidence" value="ECO:0000318"/>
    <property type="project" value="GO_Central"/>
</dbReference>
<dbReference type="GO" id="GO:0007283">
    <property type="term" value="P:spermatogenesis"/>
    <property type="evidence" value="ECO:0007669"/>
    <property type="project" value="Ensembl"/>
</dbReference>
<dbReference type="CDD" id="cd17119">
    <property type="entry name" value="Ubl_HERP2"/>
    <property type="match status" value="1"/>
</dbReference>
<dbReference type="FunFam" id="3.10.20.90:FF:000046">
    <property type="entry name" value="Homocysteine-responsive endoplasmic reticulum-resident ubiquitin-like domain member 2 protein"/>
    <property type="match status" value="1"/>
</dbReference>
<dbReference type="Gene3D" id="3.10.20.90">
    <property type="entry name" value="Phosphatidylinositol 3-kinase Catalytic Subunit, Chain A, domain 1"/>
    <property type="match status" value="1"/>
</dbReference>
<dbReference type="InterPro" id="IPR039751">
    <property type="entry name" value="HERPUD1/2"/>
</dbReference>
<dbReference type="InterPro" id="IPR000626">
    <property type="entry name" value="Ubiquitin-like_dom"/>
</dbReference>
<dbReference type="InterPro" id="IPR029071">
    <property type="entry name" value="Ubiquitin-like_domsf"/>
</dbReference>
<dbReference type="PANTHER" id="PTHR12943:SF5">
    <property type="entry name" value="HOMOCYSTEINE-RESPONSIVE ENDOPLASMIC RETICULUM-RESIDENT UBIQUITIN-LIKE DOMAIN MEMBER 2 PROTEIN"/>
    <property type="match status" value="1"/>
</dbReference>
<dbReference type="PANTHER" id="PTHR12943">
    <property type="entry name" value="HOMOCYSTEINE-RESPONSIVE ENDOPLASMIC RETICULUM-RESIDENT UNIQUITIN-LIKE DOMAIN HERPUD PROTEIN FAMILY MEMBER"/>
    <property type="match status" value="1"/>
</dbReference>
<dbReference type="Pfam" id="PF00240">
    <property type="entry name" value="ubiquitin"/>
    <property type="match status" value="1"/>
</dbReference>
<dbReference type="SMART" id="SM00213">
    <property type="entry name" value="UBQ"/>
    <property type="match status" value="1"/>
</dbReference>
<dbReference type="SUPFAM" id="SSF54236">
    <property type="entry name" value="Ubiquitin-like"/>
    <property type="match status" value="1"/>
</dbReference>
<dbReference type="PROSITE" id="PS50053">
    <property type="entry name" value="UBIQUITIN_2"/>
    <property type="match status" value="1"/>
</dbReference>